<accession>P35477</accession>
<comment type="function">
    <text evidence="1">Participates in electron transfer between P700 and the cytochrome b6-f complex in photosystem I.</text>
</comment>
<comment type="cofactor">
    <cofactor evidence="1">
        <name>Cu(2+)</name>
        <dbReference type="ChEBI" id="CHEBI:29036"/>
    </cofactor>
</comment>
<comment type="subcellular location">
    <subcellularLocation>
        <location evidence="2">Plastid</location>
        <location evidence="2">Chloroplast thylakoid membrane</location>
        <topology evidence="1">Peripheral membrane protein</topology>
        <orientation evidence="1">Lumenal side</orientation>
    </subcellularLocation>
    <text>Loosely bound to the inner thylakoid membrane surface in chloroplasts and/or in the lumen (By similarity).</text>
</comment>
<comment type="miscellaneous">
    <text>The sequence shown is that of plastocyanin B'.</text>
</comment>
<comment type="similarity">
    <text evidence="3">Belongs to the plastocyanin family.</text>
</comment>
<dbReference type="PIR" id="S40487">
    <property type="entry name" value="S40487"/>
</dbReference>
<dbReference type="PIR" id="S40488">
    <property type="entry name" value="S40488"/>
</dbReference>
<dbReference type="SMR" id="P35477"/>
<dbReference type="STRING" id="4097.P35477"/>
<dbReference type="PaxDb" id="4097-P35477"/>
<dbReference type="Proteomes" id="UP000084051">
    <property type="component" value="Unplaced"/>
</dbReference>
<dbReference type="GO" id="GO:0009535">
    <property type="term" value="C:chloroplast thylakoid membrane"/>
    <property type="evidence" value="ECO:0007669"/>
    <property type="project" value="UniProtKB-SubCell"/>
</dbReference>
<dbReference type="GO" id="GO:0005507">
    <property type="term" value="F:copper ion binding"/>
    <property type="evidence" value="ECO:0007669"/>
    <property type="project" value="InterPro"/>
</dbReference>
<dbReference type="GO" id="GO:0009055">
    <property type="term" value="F:electron transfer activity"/>
    <property type="evidence" value="ECO:0007669"/>
    <property type="project" value="InterPro"/>
</dbReference>
<dbReference type="CDD" id="cd04219">
    <property type="entry name" value="Plastocyanin"/>
    <property type="match status" value="1"/>
</dbReference>
<dbReference type="Gene3D" id="2.60.40.420">
    <property type="entry name" value="Cupredoxins - blue copper proteins"/>
    <property type="match status" value="1"/>
</dbReference>
<dbReference type="InterPro" id="IPR000923">
    <property type="entry name" value="BlueCu_1"/>
</dbReference>
<dbReference type="InterPro" id="IPR028871">
    <property type="entry name" value="BlueCu_1_BS"/>
</dbReference>
<dbReference type="InterPro" id="IPR001235">
    <property type="entry name" value="Copper_blue_Plastocyanin"/>
</dbReference>
<dbReference type="InterPro" id="IPR008972">
    <property type="entry name" value="Cupredoxin"/>
</dbReference>
<dbReference type="InterPro" id="IPR002387">
    <property type="entry name" value="Plastocyanin"/>
</dbReference>
<dbReference type="NCBIfam" id="TIGR02656">
    <property type="entry name" value="cyanin_plasto"/>
    <property type="match status" value="1"/>
</dbReference>
<dbReference type="PANTHER" id="PTHR34192">
    <property type="entry name" value="PLASTOCYANIN MAJOR ISOFORM, CHLOROPLASTIC-RELATED"/>
    <property type="match status" value="1"/>
</dbReference>
<dbReference type="PANTHER" id="PTHR34192:SF10">
    <property type="entry name" value="PLASTOCYANIN MAJOR ISOFORM, CHLOROPLASTIC-RELATED"/>
    <property type="match status" value="1"/>
</dbReference>
<dbReference type="Pfam" id="PF00127">
    <property type="entry name" value="Copper-bind"/>
    <property type="match status" value="1"/>
</dbReference>
<dbReference type="PRINTS" id="PR00156">
    <property type="entry name" value="COPPERBLUE"/>
</dbReference>
<dbReference type="PRINTS" id="PR00157">
    <property type="entry name" value="PLASTOCYANIN"/>
</dbReference>
<dbReference type="SUPFAM" id="SSF49503">
    <property type="entry name" value="Cupredoxins"/>
    <property type="match status" value="1"/>
</dbReference>
<dbReference type="PROSITE" id="PS00196">
    <property type="entry name" value="COPPER_BLUE"/>
    <property type="match status" value="1"/>
</dbReference>
<keyword id="KW-0150">Chloroplast</keyword>
<keyword id="KW-0186">Copper</keyword>
<keyword id="KW-0903">Direct protein sequencing</keyword>
<keyword id="KW-0249">Electron transport</keyword>
<keyword id="KW-0472">Membrane</keyword>
<keyword id="KW-0479">Metal-binding</keyword>
<keyword id="KW-0934">Plastid</keyword>
<keyword id="KW-1185">Reference proteome</keyword>
<keyword id="KW-0793">Thylakoid</keyword>
<keyword id="KW-0813">Transport</keyword>
<feature type="chain" id="PRO_0000085577" description="Plastocyanin B'/B''">
    <location>
        <begin position="1"/>
        <end position="99"/>
    </location>
</feature>
<feature type="domain" description="Plastocyanin-like">
    <location>
        <begin position="1"/>
        <end position="99"/>
    </location>
</feature>
<feature type="binding site" evidence="1">
    <location>
        <position position="37"/>
    </location>
    <ligand>
        <name>Cu cation</name>
        <dbReference type="ChEBI" id="CHEBI:23378"/>
    </ligand>
</feature>
<feature type="binding site" evidence="1">
    <location>
        <position position="84"/>
    </location>
    <ligand>
        <name>Cu cation</name>
        <dbReference type="ChEBI" id="CHEBI:23378"/>
    </ligand>
</feature>
<feature type="binding site" evidence="1">
    <location>
        <position position="87"/>
    </location>
    <ligand>
        <name>Cu cation</name>
        <dbReference type="ChEBI" id="CHEBI:23378"/>
    </ligand>
</feature>
<feature type="binding site" evidence="1">
    <location>
        <position position="92"/>
    </location>
    <ligand>
        <name>Cu cation</name>
        <dbReference type="ChEBI" id="CHEBI:23378"/>
    </ligand>
</feature>
<feature type="sequence variant" description="In plastocyanin B''.">
    <original>G</original>
    <variation>A</variation>
    <location>
        <position position="65"/>
    </location>
</feature>
<feature type="sequence variant" description="In plastocyanin B''.">
    <original>T</original>
    <variation>S</variation>
    <location>
        <position position="81"/>
    </location>
</feature>
<feature type="sequence variant" description="In plastocyanin B''.">
    <original>A</original>
    <variation>S</variation>
    <location>
        <position position="85"/>
    </location>
</feature>
<name>PLAS2_TOBAC</name>
<evidence type="ECO:0000250" key="1">
    <source>
        <dbReference type="UniProtKB" id="P18068"/>
    </source>
</evidence>
<evidence type="ECO:0000269" key="2">
    <source>
    </source>
</evidence>
<evidence type="ECO:0000305" key="3"/>
<reference key="1">
    <citation type="journal article" date="1993" name="Biochim. Biophys. Acta">
        <title>Twin plastocyanin dimorphism in tobacco.</title>
        <authorList>
            <person name="Dimitrov M.I."/>
            <person name="Donchev A.A."/>
            <person name="Egorov T.A."/>
        </authorList>
    </citation>
    <scope>PROTEIN SEQUENCE</scope>
    <scope>SUBCELLULAR LOCATION</scope>
    <source>
        <strain>cv. Virginia</strain>
        <tissue>Leaf</tissue>
    </source>
</reference>
<protein>
    <recommendedName>
        <fullName>Plastocyanin B'/B''</fullName>
    </recommendedName>
</protein>
<proteinExistence type="evidence at protein level"/>
<organism>
    <name type="scientific">Nicotiana tabacum</name>
    <name type="common">Common tobacco</name>
    <dbReference type="NCBI Taxonomy" id="4097"/>
    <lineage>
        <taxon>Eukaryota</taxon>
        <taxon>Viridiplantae</taxon>
        <taxon>Streptophyta</taxon>
        <taxon>Embryophyta</taxon>
        <taxon>Tracheophyta</taxon>
        <taxon>Spermatophyta</taxon>
        <taxon>Magnoliopsida</taxon>
        <taxon>eudicotyledons</taxon>
        <taxon>Gunneridae</taxon>
        <taxon>Pentapetalae</taxon>
        <taxon>asterids</taxon>
        <taxon>lamiids</taxon>
        <taxon>Solanales</taxon>
        <taxon>Solanaceae</taxon>
        <taxon>Nicotianoideae</taxon>
        <taxon>Nicotianeae</taxon>
        <taxon>Nicotiana</taxon>
    </lineage>
</organism>
<sequence>IEVLLGSDDGGLAFVPGNFSVSAGEKITFKNNAGFPHNVVFDEDEIPAGVDASKISMSEEDLLNGPGETYSVTLSEKGTYTFYCAPHQGAGMVGKVTVN</sequence>